<reference key="1">
    <citation type="journal article" date="2006" name="Proc. Natl. Acad. Sci. U.S.A.">
        <title>Multireplicon genome architecture of Lactobacillus salivarius.</title>
        <authorList>
            <person name="Claesson M.J."/>
            <person name="Li Y."/>
            <person name="Leahy S."/>
            <person name="Canchaya C."/>
            <person name="van Pijkeren J.P."/>
            <person name="Cerdeno-Tarraga A.M."/>
            <person name="Parkhill J."/>
            <person name="Flynn S."/>
            <person name="O'Sullivan G.C."/>
            <person name="Collins J.K."/>
            <person name="Higgins D."/>
            <person name="Shanahan F."/>
            <person name="Fitzgerald G.F."/>
            <person name="van Sinderen D."/>
            <person name="O'Toole P.W."/>
        </authorList>
    </citation>
    <scope>NUCLEOTIDE SEQUENCE [LARGE SCALE GENOMIC DNA]</scope>
    <source>
        <strain>UCC118</strain>
    </source>
</reference>
<name>FPG_LIGS1</name>
<protein>
    <recommendedName>
        <fullName evidence="2">Formamidopyrimidine-DNA glycosylase</fullName>
        <shortName evidence="2">Fapy-DNA glycosylase</shortName>
        <ecNumber evidence="2">3.2.2.23</ecNumber>
    </recommendedName>
    <alternativeName>
        <fullName evidence="2">DNA-(apurinic or apyrimidinic site) lyase MutM</fullName>
        <shortName evidence="2">AP lyase MutM</shortName>
        <ecNumber evidence="2">4.2.99.18</ecNumber>
    </alternativeName>
</protein>
<accession>Q1WUN7</accession>
<dbReference type="EC" id="3.2.2.23" evidence="2"/>
<dbReference type="EC" id="4.2.99.18" evidence="2"/>
<dbReference type="EMBL" id="CP000233">
    <property type="protein sequence ID" value="ABD99298.1"/>
    <property type="molecule type" value="Genomic_DNA"/>
</dbReference>
<dbReference type="RefSeq" id="WP_003699782.1">
    <property type="nucleotide sequence ID" value="NC_007929.1"/>
</dbReference>
<dbReference type="RefSeq" id="YP_535381.1">
    <property type="nucleotide sequence ID" value="NC_007929.1"/>
</dbReference>
<dbReference type="SMR" id="Q1WUN7"/>
<dbReference type="STRING" id="362948.LSL_0489"/>
<dbReference type="KEGG" id="lsl:LSL_0489"/>
<dbReference type="PATRIC" id="fig|362948.14.peg.565"/>
<dbReference type="HOGENOM" id="CLU_038423_1_2_9"/>
<dbReference type="OrthoDB" id="9800855at2"/>
<dbReference type="Proteomes" id="UP000006559">
    <property type="component" value="Chromosome"/>
</dbReference>
<dbReference type="GO" id="GO:0034039">
    <property type="term" value="F:8-oxo-7,8-dihydroguanine DNA N-glycosylase activity"/>
    <property type="evidence" value="ECO:0007669"/>
    <property type="project" value="TreeGrafter"/>
</dbReference>
<dbReference type="GO" id="GO:0140078">
    <property type="term" value="F:class I DNA-(apurinic or apyrimidinic site) endonuclease activity"/>
    <property type="evidence" value="ECO:0007669"/>
    <property type="project" value="UniProtKB-EC"/>
</dbReference>
<dbReference type="GO" id="GO:0003684">
    <property type="term" value="F:damaged DNA binding"/>
    <property type="evidence" value="ECO:0007669"/>
    <property type="project" value="InterPro"/>
</dbReference>
<dbReference type="GO" id="GO:0008270">
    <property type="term" value="F:zinc ion binding"/>
    <property type="evidence" value="ECO:0007669"/>
    <property type="project" value="UniProtKB-UniRule"/>
</dbReference>
<dbReference type="GO" id="GO:0006284">
    <property type="term" value="P:base-excision repair"/>
    <property type="evidence" value="ECO:0007669"/>
    <property type="project" value="InterPro"/>
</dbReference>
<dbReference type="CDD" id="cd08966">
    <property type="entry name" value="EcFpg-like_N"/>
    <property type="match status" value="1"/>
</dbReference>
<dbReference type="FunFam" id="1.10.8.50:FF:000003">
    <property type="entry name" value="Formamidopyrimidine-DNA glycosylase"/>
    <property type="match status" value="1"/>
</dbReference>
<dbReference type="FunFam" id="3.20.190.10:FF:000001">
    <property type="entry name" value="Formamidopyrimidine-DNA glycosylase"/>
    <property type="match status" value="1"/>
</dbReference>
<dbReference type="Gene3D" id="1.10.8.50">
    <property type="match status" value="1"/>
</dbReference>
<dbReference type="Gene3D" id="3.20.190.10">
    <property type="entry name" value="MutM-like, N-terminal"/>
    <property type="match status" value="1"/>
</dbReference>
<dbReference type="HAMAP" id="MF_00103">
    <property type="entry name" value="Fapy_DNA_glycosyl"/>
    <property type="match status" value="1"/>
</dbReference>
<dbReference type="InterPro" id="IPR015886">
    <property type="entry name" value="DNA_glyclase/AP_lyase_DNA-bd"/>
</dbReference>
<dbReference type="InterPro" id="IPR015887">
    <property type="entry name" value="DNA_glyclase_Znf_dom_DNA_BS"/>
</dbReference>
<dbReference type="InterPro" id="IPR020629">
    <property type="entry name" value="Formamido-pyr_DNA_Glyclase"/>
</dbReference>
<dbReference type="InterPro" id="IPR012319">
    <property type="entry name" value="FPG_cat"/>
</dbReference>
<dbReference type="InterPro" id="IPR035937">
    <property type="entry name" value="MutM-like_N-ter"/>
</dbReference>
<dbReference type="InterPro" id="IPR010979">
    <property type="entry name" value="Ribosomal_uS13-like_H2TH"/>
</dbReference>
<dbReference type="InterPro" id="IPR000214">
    <property type="entry name" value="Znf_DNA_glyclase/AP_lyase"/>
</dbReference>
<dbReference type="InterPro" id="IPR010663">
    <property type="entry name" value="Znf_FPG/IleRS"/>
</dbReference>
<dbReference type="NCBIfam" id="TIGR00577">
    <property type="entry name" value="fpg"/>
    <property type="match status" value="1"/>
</dbReference>
<dbReference type="NCBIfam" id="NF002211">
    <property type="entry name" value="PRK01103.1"/>
    <property type="match status" value="1"/>
</dbReference>
<dbReference type="PANTHER" id="PTHR22993">
    <property type="entry name" value="FORMAMIDOPYRIMIDINE-DNA GLYCOSYLASE"/>
    <property type="match status" value="1"/>
</dbReference>
<dbReference type="PANTHER" id="PTHR22993:SF9">
    <property type="entry name" value="FORMAMIDOPYRIMIDINE-DNA GLYCOSYLASE"/>
    <property type="match status" value="1"/>
</dbReference>
<dbReference type="Pfam" id="PF01149">
    <property type="entry name" value="Fapy_DNA_glyco"/>
    <property type="match status" value="1"/>
</dbReference>
<dbReference type="Pfam" id="PF06831">
    <property type="entry name" value="H2TH"/>
    <property type="match status" value="1"/>
</dbReference>
<dbReference type="Pfam" id="PF06827">
    <property type="entry name" value="zf-FPG_IleRS"/>
    <property type="match status" value="1"/>
</dbReference>
<dbReference type="SMART" id="SM00898">
    <property type="entry name" value="Fapy_DNA_glyco"/>
    <property type="match status" value="1"/>
</dbReference>
<dbReference type="SMART" id="SM01232">
    <property type="entry name" value="H2TH"/>
    <property type="match status" value="1"/>
</dbReference>
<dbReference type="SUPFAM" id="SSF57716">
    <property type="entry name" value="Glucocorticoid receptor-like (DNA-binding domain)"/>
    <property type="match status" value="1"/>
</dbReference>
<dbReference type="SUPFAM" id="SSF81624">
    <property type="entry name" value="N-terminal domain of MutM-like DNA repair proteins"/>
    <property type="match status" value="1"/>
</dbReference>
<dbReference type="SUPFAM" id="SSF46946">
    <property type="entry name" value="S13-like H2TH domain"/>
    <property type="match status" value="1"/>
</dbReference>
<dbReference type="PROSITE" id="PS51068">
    <property type="entry name" value="FPG_CAT"/>
    <property type="match status" value="1"/>
</dbReference>
<dbReference type="PROSITE" id="PS01242">
    <property type="entry name" value="ZF_FPG_1"/>
    <property type="match status" value="1"/>
</dbReference>
<dbReference type="PROSITE" id="PS51066">
    <property type="entry name" value="ZF_FPG_2"/>
    <property type="match status" value="1"/>
</dbReference>
<evidence type="ECO:0000250" key="1"/>
<evidence type="ECO:0000255" key="2">
    <source>
        <dbReference type="HAMAP-Rule" id="MF_00103"/>
    </source>
</evidence>
<organism>
    <name type="scientific">Ligilactobacillus salivarius (strain UCC118)</name>
    <name type="common">Lactobacillus salivarius</name>
    <dbReference type="NCBI Taxonomy" id="362948"/>
    <lineage>
        <taxon>Bacteria</taxon>
        <taxon>Bacillati</taxon>
        <taxon>Bacillota</taxon>
        <taxon>Bacilli</taxon>
        <taxon>Lactobacillales</taxon>
        <taxon>Lactobacillaceae</taxon>
        <taxon>Ligilactobacillus</taxon>
    </lineage>
</organism>
<gene>
    <name evidence="2" type="primary">mutM</name>
    <name evidence="2" type="synonym">fpg</name>
    <name type="ordered locus">LSL_0489</name>
</gene>
<keyword id="KW-0227">DNA damage</keyword>
<keyword id="KW-0234">DNA repair</keyword>
<keyword id="KW-0238">DNA-binding</keyword>
<keyword id="KW-0326">Glycosidase</keyword>
<keyword id="KW-0378">Hydrolase</keyword>
<keyword id="KW-0456">Lyase</keyword>
<keyword id="KW-0479">Metal-binding</keyword>
<keyword id="KW-0511">Multifunctional enzyme</keyword>
<keyword id="KW-1185">Reference proteome</keyword>
<keyword id="KW-0862">Zinc</keyword>
<keyword id="KW-0863">Zinc-finger</keyword>
<feature type="initiator methionine" description="Removed" evidence="1">
    <location>
        <position position="1"/>
    </location>
</feature>
<feature type="chain" id="PRO_1000008711" description="Formamidopyrimidine-DNA glycosylase">
    <location>
        <begin position="2"/>
        <end position="276"/>
    </location>
</feature>
<feature type="zinc finger region" description="FPG-type" evidence="2">
    <location>
        <begin position="239"/>
        <end position="273"/>
    </location>
</feature>
<feature type="active site" description="Schiff-base intermediate with DNA" evidence="2">
    <location>
        <position position="2"/>
    </location>
</feature>
<feature type="active site" description="Proton donor" evidence="2">
    <location>
        <position position="3"/>
    </location>
</feature>
<feature type="active site" description="Proton donor; for beta-elimination activity" evidence="2">
    <location>
        <position position="58"/>
    </location>
</feature>
<feature type="active site" description="Proton donor; for delta-elimination activity" evidence="2">
    <location>
        <position position="263"/>
    </location>
</feature>
<feature type="binding site" evidence="2">
    <location>
        <position position="92"/>
    </location>
    <ligand>
        <name>DNA</name>
        <dbReference type="ChEBI" id="CHEBI:16991"/>
    </ligand>
</feature>
<feature type="binding site" evidence="2">
    <location>
        <position position="111"/>
    </location>
    <ligand>
        <name>DNA</name>
        <dbReference type="ChEBI" id="CHEBI:16991"/>
    </ligand>
</feature>
<feature type="binding site" evidence="2">
    <location>
        <position position="154"/>
    </location>
    <ligand>
        <name>DNA</name>
        <dbReference type="ChEBI" id="CHEBI:16991"/>
    </ligand>
</feature>
<sequence>MPELPEVETVRRGLEKLVLNKKIKDIRVLYSKTIVNEESEFIEKLTNKTIKKIDRRGKYLLFRFSSDLTMISHLRMEGKYFVEPSTKEVEKHTHVVFDFTDGTSLRYNDVRKFGRMQLVKTGMEIQTAGLAKLGPEPKEKTFIVEDFSKNLKRRKKAIKNALLDQTIVAGLGNIYADEVLWMSKIHPETPANKLTEEEVKVLRDNIIKELALATEAGGTTIRSYTDAFRHSGGFQFSLHAYQRTGDPCERCGTPIQRIVVGQRGTHFCPKCQVVKS</sequence>
<comment type="function">
    <text evidence="2">Involved in base excision repair of DNA damaged by oxidation or by mutagenic agents. Acts as a DNA glycosylase that recognizes and removes damaged bases. Has a preference for oxidized purines, such as 7,8-dihydro-8-oxoguanine (8-oxoG). Has AP (apurinic/apyrimidinic) lyase activity and introduces nicks in the DNA strand. Cleaves the DNA backbone by beta-delta elimination to generate a single-strand break at the site of the removed base with both 3'- and 5'-phosphates.</text>
</comment>
<comment type="catalytic activity">
    <reaction evidence="2">
        <text>Hydrolysis of DNA containing ring-opened 7-methylguanine residues, releasing 2,6-diamino-4-hydroxy-5-(N-methyl)formamidopyrimidine.</text>
        <dbReference type="EC" id="3.2.2.23"/>
    </reaction>
</comment>
<comment type="catalytic activity">
    <reaction evidence="2">
        <text>2'-deoxyribonucleotide-(2'-deoxyribose 5'-phosphate)-2'-deoxyribonucleotide-DNA = a 3'-end 2'-deoxyribonucleotide-(2,3-dehydro-2,3-deoxyribose 5'-phosphate)-DNA + a 5'-end 5'-phospho-2'-deoxyribonucleoside-DNA + H(+)</text>
        <dbReference type="Rhea" id="RHEA:66592"/>
        <dbReference type="Rhea" id="RHEA-COMP:13180"/>
        <dbReference type="Rhea" id="RHEA-COMP:16897"/>
        <dbReference type="Rhea" id="RHEA-COMP:17067"/>
        <dbReference type="ChEBI" id="CHEBI:15378"/>
        <dbReference type="ChEBI" id="CHEBI:136412"/>
        <dbReference type="ChEBI" id="CHEBI:157695"/>
        <dbReference type="ChEBI" id="CHEBI:167181"/>
        <dbReference type="EC" id="4.2.99.18"/>
    </reaction>
</comment>
<comment type="cofactor">
    <cofactor evidence="2">
        <name>Zn(2+)</name>
        <dbReference type="ChEBI" id="CHEBI:29105"/>
    </cofactor>
    <text evidence="2">Binds 1 zinc ion per subunit.</text>
</comment>
<comment type="subunit">
    <text evidence="2">Monomer.</text>
</comment>
<comment type="similarity">
    <text evidence="2">Belongs to the FPG family.</text>
</comment>
<proteinExistence type="inferred from homology"/>